<name>BEV1F_BETPN</name>
<organism>
    <name type="scientific">Betula pendula</name>
    <name type="common">European white birch</name>
    <name type="synonym">Betula verrucosa</name>
    <dbReference type="NCBI Taxonomy" id="3505"/>
    <lineage>
        <taxon>Eukaryota</taxon>
        <taxon>Viridiplantae</taxon>
        <taxon>Streptophyta</taxon>
        <taxon>Embryophyta</taxon>
        <taxon>Tracheophyta</taxon>
        <taxon>Spermatophyta</taxon>
        <taxon>Magnoliopsida</taxon>
        <taxon>eudicotyledons</taxon>
        <taxon>Gunneridae</taxon>
        <taxon>Pentapetalae</taxon>
        <taxon>rosids</taxon>
        <taxon>fabids</taxon>
        <taxon>Fagales</taxon>
        <taxon>Betulaceae</taxon>
        <taxon>Betula</taxon>
    </lineage>
</organism>
<protein>
    <recommendedName>
        <fullName>Major pollen allergen Bet v 1-F/I</fullName>
    </recommendedName>
    <alternativeName>
        <fullName>Allergen Bet v I-F/I</fullName>
    </alternativeName>
    <allergenName>Bet v 1-F/I</allergenName>
</protein>
<feature type="initiator methionine" description="Removed">
    <location>
        <position position="1"/>
    </location>
</feature>
<feature type="chain" id="PRO_0000154179" description="Major pollen allergen Bet v 1-F/I">
    <location>
        <begin position="2"/>
        <end position="160"/>
    </location>
</feature>
<feature type="binding site" evidence="2">
    <location>
        <position position="55"/>
    </location>
    <ligand>
        <name>brassinolide</name>
        <dbReference type="ChEBI" id="CHEBI:28277"/>
    </ligand>
</feature>
<feature type="binding site" evidence="2">
    <location>
        <position position="82"/>
    </location>
    <ligand>
        <name>brassinolide</name>
        <dbReference type="ChEBI" id="CHEBI:28277"/>
    </ligand>
</feature>
<feature type="binding site" evidence="2">
    <location>
        <position position="84"/>
    </location>
    <ligand>
        <name>brassinolide</name>
        <dbReference type="ChEBI" id="CHEBI:28277"/>
    </ligand>
</feature>
<feature type="binding site" evidence="2">
    <location>
        <position position="101"/>
    </location>
    <ligand>
        <name>brassinolide</name>
        <dbReference type="ChEBI" id="CHEBI:28277"/>
    </ligand>
</feature>
<gene>
    <name type="primary">BETV1F</name>
</gene>
<gene>
    <name type="primary">BETV1I</name>
</gene>
<reference key="1">
    <citation type="journal article" date="1995" name="J. Biol. Chem.">
        <title>Isoforms of Bet v 1, the major birch pollen allergen, analyzed by liquid chromatography, mass spectrometry, and cDNA cloning.</title>
        <authorList>
            <person name="Swoboda I."/>
            <person name="Jilek A."/>
            <person name="Ferreira F."/>
            <person name="Engel E."/>
            <person name="Hoffman-Sommergruber K."/>
            <person name="Scheiner O."/>
            <person name="Kraft D."/>
            <person name="Breiteneder H."/>
            <person name="Pittenauer E."/>
            <person name="Schmid E."/>
            <person name="Vicente O."/>
            <person name="Heberle-Bors E."/>
            <person name="Ahorn H."/>
            <person name="Breitenbach M."/>
        </authorList>
    </citation>
    <scope>NUCLEOTIDE SEQUENCE [MRNA]</scope>
    <scope>PARTIAL PROTEIN SEQUENCE</scope>
    <source>
        <tissue>Pollen</tissue>
    </source>
</reference>
<evidence type="ECO:0000250" key="1"/>
<evidence type="ECO:0000250" key="2">
    <source>
        <dbReference type="UniProtKB" id="P43185"/>
    </source>
</evidence>
<evidence type="ECO:0000305" key="3"/>
<proteinExistence type="evidence at protein level"/>
<keyword id="KW-0020">Allergen</keyword>
<keyword id="KW-0963">Cytoplasm</keyword>
<keyword id="KW-0903">Direct protein sequencing</keyword>
<keyword id="KW-0568">Pathogenesis-related protein</keyword>
<keyword id="KW-0611">Plant defense</keyword>
<sequence length="160" mass="17552">MGVFNYEIEATSVIPAARLFKAFILDGDNLFPKVAPQAISSVENIEGNGGPGTIKKISFPEGFPFKYVKDRVDEVDHTNFKYSYSVIEGGPVGDTLEKISNEIKIVATPNGGSILKINNKYHTKGDHEVKAEQIKASKEMGETLLRAVESYLLAHSDAYN</sequence>
<comment type="function">
    <text evidence="1">May be a general steroid carrier protein.</text>
</comment>
<comment type="subcellular location">
    <subcellularLocation>
        <location>Cytoplasm</location>
    </subcellularLocation>
</comment>
<comment type="allergen">
    <text>Causes an allergic reaction in human. Is a cause of type I allergic reactions in Europe, North America and USSR.</text>
</comment>
<comment type="similarity">
    <text evidence="3">Belongs to the BetVI family.</text>
</comment>
<accession>P43179</accession>
<dbReference type="EMBL" id="X77268">
    <property type="protein sequence ID" value="CAA54484.1"/>
    <property type="molecule type" value="mRNA"/>
</dbReference>
<dbReference type="EMBL" id="X77274">
    <property type="protein sequence ID" value="CAA54490.1"/>
    <property type="molecule type" value="mRNA"/>
</dbReference>
<dbReference type="PIR" id="E55699">
    <property type="entry name" value="E55699"/>
</dbReference>
<dbReference type="SMR" id="P43179"/>
<dbReference type="Allergome" id="89">
    <property type="allergen name" value="Bet v 1"/>
</dbReference>
<dbReference type="Allergome" id="98">
    <property type="allergen name" value="Bet v 1.0104"/>
</dbReference>
<dbReference type="GO" id="GO:0005737">
    <property type="term" value="C:cytoplasm"/>
    <property type="evidence" value="ECO:0007669"/>
    <property type="project" value="UniProtKB-SubCell"/>
</dbReference>
<dbReference type="GO" id="GO:0005634">
    <property type="term" value="C:nucleus"/>
    <property type="evidence" value="ECO:0007669"/>
    <property type="project" value="TreeGrafter"/>
</dbReference>
<dbReference type="GO" id="GO:0010427">
    <property type="term" value="F:abscisic acid binding"/>
    <property type="evidence" value="ECO:0007669"/>
    <property type="project" value="InterPro"/>
</dbReference>
<dbReference type="GO" id="GO:0004864">
    <property type="term" value="F:protein phosphatase inhibitor activity"/>
    <property type="evidence" value="ECO:0007669"/>
    <property type="project" value="InterPro"/>
</dbReference>
<dbReference type="GO" id="GO:0038023">
    <property type="term" value="F:signaling receptor activity"/>
    <property type="evidence" value="ECO:0007669"/>
    <property type="project" value="InterPro"/>
</dbReference>
<dbReference type="GO" id="GO:0009738">
    <property type="term" value="P:abscisic acid-activated signaling pathway"/>
    <property type="evidence" value="ECO:0007669"/>
    <property type="project" value="InterPro"/>
</dbReference>
<dbReference type="GO" id="GO:0006952">
    <property type="term" value="P:defense response"/>
    <property type="evidence" value="ECO:0007669"/>
    <property type="project" value="UniProtKB-KW"/>
</dbReference>
<dbReference type="CDD" id="cd07816">
    <property type="entry name" value="Bet_v1-like"/>
    <property type="match status" value="1"/>
</dbReference>
<dbReference type="FunFam" id="3.30.530.20:FF:000007">
    <property type="entry name" value="Major pollen allergen Bet v 1-A"/>
    <property type="match status" value="1"/>
</dbReference>
<dbReference type="Gene3D" id="3.30.530.20">
    <property type="match status" value="1"/>
</dbReference>
<dbReference type="InterPro" id="IPR000916">
    <property type="entry name" value="Bet_v_I/MLP"/>
</dbReference>
<dbReference type="InterPro" id="IPR024949">
    <property type="entry name" value="Bet_v_I_allergen"/>
</dbReference>
<dbReference type="InterPro" id="IPR050279">
    <property type="entry name" value="Plant_def-hormone_signal"/>
</dbReference>
<dbReference type="InterPro" id="IPR023393">
    <property type="entry name" value="START-like_dom_sf"/>
</dbReference>
<dbReference type="PANTHER" id="PTHR31213">
    <property type="entry name" value="OS08G0374000 PROTEIN-RELATED"/>
    <property type="match status" value="1"/>
</dbReference>
<dbReference type="PANTHER" id="PTHR31213:SF55">
    <property type="entry name" value="STRESS-INDUCED PROTEIN SAM22"/>
    <property type="match status" value="1"/>
</dbReference>
<dbReference type="Pfam" id="PF00407">
    <property type="entry name" value="Bet_v_1"/>
    <property type="match status" value="1"/>
</dbReference>
<dbReference type="PRINTS" id="PR00634">
    <property type="entry name" value="BETALLERGEN"/>
</dbReference>
<dbReference type="SMART" id="SM01037">
    <property type="entry name" value="Bet_v_1"/>
    <property type="match status" value="1"/>
</dbReference>
<dbReference type="SUPFAM" id="SSF55961">
    <property type="entry name" value="Bet v1-like"/>
    <property type="match status" value="1"/>
</dbReference>
<dbReference type="PROSITE" id="PS00451">
    <property type="entry name" value="PATHOGENESIS_BETVI"/>
    <property type="match status" value="1"/>
</dbReference>